<keyword id="KW-1185">Reference proteome</keyword>
<organism>
    <name type="scientific">Saccharomyces cerevisiae (strain ATCC 204508 / S288c)</name>
    <name type="common">Baker's yeast</name>
    <dbReference type="NCBI Taxonomy" id="559292"/>
    <lineage>
        <taxon>Eukaryota</taxon>
        <taxon>Fungi</taxon>
        <taxon>Dikarya</taxon>
        <taxon>Ascomycota</taxon>
        <taxon>Saccharomycotina</taxon>
        <taxon>Saccharomycetes</taxon>
        <taxon>Saccharomycetales</taxon>
        <taxon>Saccharomycetaceae</taxon>
        <taxon>Saccharomyces</taxon>
    </lineage>
</organism>
<sequence length="99" mass="12079">MKTVYYKEITYQQYLQLQPEQQEKYLALCQKDFEQETERIAFDRQGGVPGIARKFAQEEVAWFDRVTTWSYMNAYIPSYRRRRNLLKIDMLKMSNAEEY</sequence>
<proteinExistence type="predicted"/>
<protein>
    <recommendedName>
        <fullName>Uncharacterized protein YLR012C</fullName>
    </recommendedName>
</protein>
<reference key="1">
    <citation type="journal article" date="1997" name="Nature">
        <title>The nucleotide sequence of Saccharomyces cerevisiae chromosome XII.</title>
        <authorList>
            <person name="Johnston M."/>
            <person name="Hillier L.W."/>
            <person name="Riles L."/>
            <person name="Albermann K."/>
            <person name="Andre B."/>
            <person name="Ansorge W."/>
            <person name="Benes V."/>
            <person name="Brueckner M."/>
            <person name="Delius H."/>
            <person name="Dubois E."/>
            <person name="Duesterhoeft A."/>
            <person name="Entian K.-D."/>
            <person name="Floeth M."/>
            <person name="Goffeau A."/>
            <person name="Hebling U."/>
            <person name="Heumann K."/>
            <person name="Heuss-Neitzel D."/>
            <person name="Hilbert H."/>
            <person name="Hilger F."/>
            <person name="Kleine K."/>
            <person name="Koetter P."/>
            <person name="Louis E.J."/>
            <person name="Messenguy F."/>
            <person name="Mewes H.-W."/>
            <person name="Miosga T."/>
            <person name="Moestl D."/>
            <person name="Mueller-Auer S."/>
            <person name="Nentwich U."/>
            <person name="Obermaier B."/>
            <person name="Piravandi E."/>
            <person name="Pohl T.M."/>
            <person name="Portetelle D."/>
            <person name="Purnelle B."/>
            <person name="Rechmann S."/>
            <person name="Rieger M."/>
            <person name="Rinke M."/>
            <person name="Rose M."/>
            <person name="Scharfe M."/>
            <person name="Scherens B."/>
            <person name="Scholler P."/>
            <person name="Schwager C."/>
            <person name="Schwarz S."/>
            <person name="Underwood A.P."/>
            <person name="Urrestarazu L.A."/>
            <person name="Vandenbol M."/>
            <person name="Verhasselt P."/>
            <person name="Vierendeels F."/>
            <person name="Voet M."/>
            <person name="Volckaert G."/>
            <person name="Voss H."/>
            <person name="Wambutt R."/>
            <person name="Wedler E."/>
            <person name="Wedler H."/>
            <person name="Zimmermann F.K."/>
            <person name="Zollner A."/>
            <person name="Hani J."/>
            <person name="Hoheisel J.D."/>
        </authorList>
    </citation>
    <scope>NUCLEOTIDE SEQUENCE [LARGE SCALE GENOMIC DNA]</scope>
    <source>
        <strain>ATCC 204508 / S288c</strain>
    </source>
</reference>
<reference key="2">
    <citation type="journal article" date="2014" name="G3 (Bethesda)">
        <title>The reference genome sequence of Saccharomyces cerevisiae: Then and now.</title>
        <authorList>
            <person name="Engel S.R."/>
            <person name="Dietrich F.S."/>
            <person name="Fisk D.G."/>
            <person name="Binkley G."/>
            <person name="Balakrishnan R."/>
            <person name="Costanzo M.C."/>
            <person name="Dwight S.S."/>
            <person name="Hitz B.C."/>
            <person name="Karra K."/>
            <person name="Nash R.S."/>
            <person name="Weng S."/>
            <person name="Wong E.D."/>
            <person name="Lloyd P."/>
            <person name="Skrzypek M.S."/>
            <person name="Miyasato S.R."/>
            <person name="Simison M."/>
            <person name="Cherry J.M."/>
        </authorList>
    </citation>
    <scope>GENOME REANNOTATION</scope>
    <source>
        <strain>ATCC 204508 / S288c</strain>
    </source>
</reference>
<reference key="3">
    <citation type="journal article" date="2007" name="Genome Res.">
        <title>Approaching a complete repository of sequence-verified protein-encoding clones for Saccharomyces cerevisiae.</title>
        <authorList>
            <person name="Hu Y."/>
            <person name="Rolfs A."/>
            <person name="Bhullar B."/>
            <person name="Murthy T.V.S."/>
            <person name="Zhu C."/>
            <person name="Berger M.F."/>
            <person name="Camargo A.A."/>
            <person name="Kelley F."/>
            <person name="McCarron S."/>
            <person name="Jepson D."/>
            <person name="Richardson A."/>
            <person name="Raphael J."/>
            <person name="Moreira D."/>
            <person name="Taycher E."/>
            <person name="Zuo D."/>
            <person name="Mohr S."/>
            <person name="Kane M.F."/>
            <person name="Williamson J."/>
            <person name="Simpson A.J.G."/>
            <person name="Bulyk M.L."/>
            <person name="Harlow E."/>
            <person name="Marsischky G."/>
            <person name="Kolodner R.D."/>
            <person name="LaBaer J."/>
        </authorList>
    </citation>
    <scope>NUCLEOTIDE SEQUENCE [GENOMIC DNA]</scope>
    <source>
        <strain>ATCC 204508 / S288c</strain>
    </source>
</reference>
<reference key="4">
    <citation type="journal article" date="2003" name="Nature">
        <title>Sequencing and comparison of yeast species to identify genes and regulatory elements.</title>
        <authorList>
            <person name="Kellis M."/>
            <person name="Patterson N."/>
            <person name="Endrizzi M."/>
            <person name="Birren B.W."/>
            <person name="Lander E.S."/>
        </authorList>
    </citation>
    <scope>IDENTIFICATION OF PROBABLE INITIATION SITE</scope>
</reference>
<gene>
    <name type="ordered locus">YLR012C</name>
</gene>
<evidence type="ECO:0000305" key="1"/>
<name>YL012_YEAST</name>
<dbReference type="EMBL" id="Z73184">
    <property type="protein sequence ID" value="CAA97534.1"/>
    <property type="status" value="ALT_INIT"/>
    <property type="molecule type" value="Genomic_DNA"/>
</dbReference>
<dbReference type="EMBL" id="AY558200">
    <property type="protein sequence ID" value="AAS56526.1"/>
    <property type="status" value="ALT_INIT"/>
    <property type="molecule type" value="Genomic_DNA"/>
</dbReference>
<dbReference type="EMBL" id="BK006945">
    <property type="protein sequence ID" value="DAA09330.1"/>
    <property type="molecule type" value="Genomic_DNA"/>
</dbReference>
<dbReference type="PIR" id="S64834">
    <property type="entry name" value="S64834"/>
</dbReference>
<dbReference type="RefSeq" id="NP_013112.2">
    <property type="nucleotide sequence ID" value="NM_001181899.1"/>
</dbReference>
<dbReference type="SMR" id="Q07927"/>
<dbReference type="BioGRID" id="31286">
    <property type="interactions" value="100"/>
</dbReference>
<dbReference type="DIP" id="DIP-4837N"/>
<dbReference type="FunCoup" id="Q07927">
    <property type="interactions" value="29"/>
</dbReference>
<dbReference type="IntAct" id="Q07927">
    <property type="interactions" value="1"/>
</dbReference>
<dbReference type="STRING" id="4932.YLR012C"/>
<dbReference type="PaxDb" id="4932-YLR012C"/>
<dbReference type="EnsemblFungi" id="YLR012C_mRNA">
    <property type="protein sequence ID" value="YLR012C"/>
    <property type="gene ID" value="YLR012C"/>
</dbReference>
<dbReference type="GeneID" id="850699"/>
<dbReference type="KEGG" id="sce:YLR012C"/>
<dbReference type="AGR" id="SGD:S000004002"/>
<dbReference type="SGD" id="S000004002">
    <property type="gene designation" value="YLR012C"/>
</dbReference>
<dbReference type="VEuPathDB" id="FungiDB:YLR012C"/>
<dbReference type="eggNOG" id="ENOG502S9G6">
    <property type="taxonomic scope" value="Eukaryota"/>
</dbReference>
<dbReference type="HOGENOM" id="CLU_2307650_0_0_1"/>
<dbReference type="InParanoid" id="Q07927"/>
<dbReference type="OMA" id="SYMNAYI"/>
<dbReference type="OrthoDB" id="4053204at2759"/>
<dbReference type="BioCyc" id="YEAST:G3O-32173-MONOMER"/>
<dbReference type="BioGRID-ORCS" id="850699">
    <property type="hits" value="3 hits in 10 CRISPR screens"/>
</dbReference>
<dbReference type="PRO" id="PR:Q07927"/>
<dbReference type="Proteomes" id="UP000002311">
    <property type="component" value="Chromosome XII"/>
</dbReference>
<dbReference type="RNAct" id="Q07927">
    <property type="molecule type" value="protein"/>
</dbReference>
<feature type="chain" id="PRO_0000247155" description="Uncharacterized protein YLR012C">
    <location>
        <begin position="1"/>
        <end position="99"/>
    </location>
</feature>
<accession>Q07927</accession>
<accession>D6VY14</accession>
<comment type="sequence caution" evidence="1">
    <conflict type="erroneous initiation">
        <sequence resource="EMBL-CDS" id="AAS56526"/>
    </conflict>
</comment>
<comment type="sequence caution" evidence="1">
    <conflict type="erroneous initiation">
        <sequence resource="EMBL-CDS" id="CAA97534"/>
    </conflict>
</comment>